<comment type="function">
    <text evidence="1">Catalyzes the transfer of the phosphoribosyl group of 5-phosphorylribose-1-pyrophosphate (PRPP) to anthranilate to yield N-(5'-phosphoribosyl)-anthranilate (PRA).</text>
</comment>
<comment type="catalytic activity">
    <reaction evidence="1">
        <text>N-(5-phospho-beta-D-ribosyl)anthranilate + diphosphate = 5-phospho-alpha-D-ribose 1-diphosphate + anthranilate</text>
        <dbReference type="Rhea" id="RHEA:11768"/>
        <dbReference type="ChEBI" id="CHEBI:16567"/>
        <dbReference type="ChEBI" id="CHEBI:18277"/>
        <dbReference type="ChEBI" id="CHEBI:33019"/>
        <dbReference type="ChEBI" id="CHEBI:58017"/>
        <dbReference type="EC" id="2.4.2.18"/>
    </reaction>
</comment>
<comment type="cofactor">
    <cofactor evidence="1">
        <name>Mg(2+)</name>
        <dbReference type="ChEBI" id="CHEBI:18420"/>
    </cofactor>
    <text evidence="1">Binds 2 magnesium ions per monomer.</text>
</comment>
<comment type="pathway">
    <text evidence="1">Amino-acid biosynthesis; L-tryptophan biosynthesis; L-tryptophan from chorismate: step 2/5.</text>
</comment>
<comment type="subunit">
    <text evidence="1">Homodimer.</text>
</comment>
<comment type="similarity">
    <text evidence="1">Belongs to the anthranilate phosphoribosyltransferase family.</text>
</comment>
<proteinExistence type="inferred from homology"/>
<name>TRPD_BACCQ</name>
<evidence type="ECO:0000255" key="1">
    <source>
        <dbReference type="HAMAP-Rule" id="MF_00211"/>
    </source>
</evidence>
<protein>
    <recommendedName>
        <fullName evidence="1">Anthranilate phosphoribosyltransferase</fullName>
        <ecNumber evidence="1">2.4.2.18</ecNumber>
    </recommendedName>
</protein>
<sequence length="341" mass="36951">MNNYLRKLVEGQHLTEEEMYKAGLLLLNENILESEIAAFLVLLKAKGETAEEIYGLVRALREKALPFSNHIQGAMDNCGTGGDGAQTFNISTTSAFVLAGADVKVAKHGNRAVSSKTGSADLLEELGVNISSTPNEIDYLLEHVGIAFLFAPAMHPALKRIMKIRKELNVPTIFNLIGPLTNPVNLETQFVGIYKRDMLLPVAQVLQKLGRKQALVVNGSGFLDEASLQGENHVVILKDNEIVETSIEPEKYGFSIVKNEEIRGGNSKENAKITLGVLSGEKSVYRDTVLFNAGLALFANGKAKTIEEGITLAAHSIDSGKALAKLNLLIAASNEKLERVN</sequence>
<keyword id="KW-0028">Amino-acid biosynthesis</keyword>
<keyword id="KW-0057">Aromatic amino acid biosynthesis</keyword>
<keyword id="KW-0328">Glycosyltransferase</keyword>
<keyword id="KW-0460">Magnesium</keyword>
<keyword id="KW-0479">Metal-binding</keyword>
<keyword id="KW-0808">Transferase</keyword>
<keyword id="KW-0822">Tryptophan biosynthesis</keyword>
<dbReference type="EC" id="2.4.2.18" evidence="1"/>
<dbReference type="EMBL" id="CP000227">
    <property type="protein sequence ID" value="ACM11731.1"/>
    <property type="molecule type" value="Genomic_DNA"/>
</dbReference>
<dbReference type="SMR" id="B9IU35"/>
<dbReference type="KEGG" id="bcq:BCQ_1301"/>
<dbReference type="HOGENOM" id="CLU_034315_2_1_9"/>
<dbReference type="UniPathway" id="UPA00035">
    <property type="reaction ID" value="UER00041"/>
</dbReference>
<dbReference type="Proteomes" id="UP000000441">
    <property type="component" value="Chromosome"/>
</dbReference>
<dbReference type="GO" id="GO:0005829">
    <property type="term" value="C:cytosol"/>
    <property type="evidence" value="ECO:0007669"/>
    <property type="project" value="TreeGrafter"/>
</dbReference>
<dbReference type="GO" id="GO:0004048">
    <property type="term" value="F:anthranilate phosphoribosyltransferase activity"/>
    <property type="evidence" value="ECO:0007669"/>
    <property type="project" value="UniProtKB-UniRule"/>
</dbReference>
<dbReference type="GO" id="GO:0000287">
    <property type="term" value="F:magnesium ion binding"/>
    <property type="evidence" value="ECO:0007669"/>
    <property type="project" value="UniProtKB-UniRule"/>
</dbReference>
<dbReference type="GO" id="GO:0000162">
    <property type="term" value="P:L-tryptophan biosynthetic process"/>
    <property type="evidence" value="ECO:0007669"/>
    <property type="project" value="UniProtKB-UniRule"/>
</dbReference>
<dbReference type="FunFam" id="3.40.1030.10:FF:000002">
    <property type="entry name" value="Anthranilate phosphoribosyltransferase"/>
    <property type="match status" value="1"/>
</dbReference>
<dbReference type="Gene3D" id="3.40.1030.10">
    <property type="entry name" value="Nucleoside phosphorylase/phosphoribosyltransferase catalytic domain"/>
    <property type="match status" value="1"/>
</dbReference>
<dbReference type="Gene3D" id="1.20.970.10">
    <property type="entry name" value="Transferase, Pyrimidine Nucleoside Phosphorylase, Chain C"/>
    <property type="match status" value="1"/>
</dbReference>
<dbReference type="HAMAP" id="MF_00211">
    <property type="entry name" value="TrpD"/>
    <property type="match status" value="1"/>
</dbReference>
<dbReference type="InterPro" id="IPR005940">
    <property type="entry name" value="Anthranilate_Pribosyl_Tfrase"/>
</dbReference>
<dbReference type="InterPro" id="IPR000312">
    <property type="entry name" value="Glycosyl_Trfase_fam3"/>
</dbReference>
<dbReference type="InterPro" id="IPR017459">
    <property type="entry name" value="Glycosyl_Trfase_fam3_N_dom"/>
</dbReference>
<dbReference type="InterPro" id="IPR036320">
    <property type="entry name" value="Glycosyl_Trfase_fam3_N_dom_sf"/>
</dbReference>
<dbReference type="InterPro" id="IPR035902">
    <property type="entry name" value="Nuc_phospho_transferase"/>
</dbReference>
<dbReference type="NCBIfam" id="TIGR01245">
    <property type="entry name" value="trpD"/>
    <property type="match status" value="1"/>
</dbReference>
<dbReference type="PANTHER" id="PTHR43285">
    <property type="entry name" value="ANTHRANILATE PHOSPHORIBOSYLTRANSFERASE"/>
    <property type="match status" value="1"/>
</dbReference>
<dbReference type="PANTHER" id="PTHR43285:SF2">
    <property type="entry name" value="ANTHRANILATE PHOSPHORIBOSYLTRANSFERASE"/>
    <property type="match status" value="1"/>
</dbReference>
<dbReference type="Pfam" id="PF02885">
    <property type="entry name" value="Glycos_trans_3N"/>
    <property type="match status" value="1"/>
</dbReference>
<dbReference type="Pfam" id="PF00591">
    <property type="entry name" value="Glycos_transf_3"/>
    <property type="match status" value="1"/>
</dbReference>
<dbReference type="SUPFAM" id="SSF52418">
    <property type="entry name" value="Nucleoside phosphorylase/phosphoribosyltransferase catalytic domain"/>
    <property type="match status" value="1"/>
</dbReference>
<dbReference type="SUPFAM" id="SSF47648">
    <property type="entry name" value="Nucleoside phosphorylase/phosphoribosyltransferase N-terminal domain"/>
    <property type="match status" value="1"/>
</dbReference>
<gene>
    <name evidence="1" type="primary">trpD</name>
    <name type="ordered locus">BCQ_1301</name>
</gene>
<organism>
    <name type="scientific">Bacillus cereus (strain Q1)</name>
    <dbReference type="NCBI Taxonomy" id="361100"/>
    <lineage>
        <taxon>Bacteria</taxon>
        <taxon>Bacillati</taxon>
        <taxon>Bacillota</taxon>
        <taxon>Bacilli</taxon>
        <taxon>Bacillales</taxon>
        <taxon>Bacillaceae</taxon>
        <taxon>Bacillus</taxon>
        <taxon>Bacillus cereus group</taxon>
    </lineage>
</organism>
<accession>B9IU35</accession>
<feature type="chain" id="PRO_1000198806" description="Anthranilate phosphoribosyltransferase">
    <location>
        <begin position="1"/>
        <end position="341"/>
    </location>
</feature>
<feature type="binding site" evidence="1">
    <location>
        <position position="79"/>
    </location>
    <ligand>
        <name>5-phospho-alpha-D-ribose 1-diphosphate</name>
        <dbReference type="ChEBI" id="CHEBI:58017"/>
    </ligand>
</feature>
<feature type="binding site" evidence="1">
    <location>
        <position position="79"/>
    </location>
    <ligand>
        <name>anthranilate</name>
        <dbReference type="ChEBI" id="CHEBI:16567"/>
        <label>1</label>
    </ligand>
</feature>
<feature type="binding site" evidence="1">
    <location>
        <begin position="82"/>
        <end position="83"/>
    </location>
    <ligand>
        <name>5-phospho-alpha-D-ribose 1-diphosphate</name>
        <dbReference type="ChEBI" id="CHEBI:58017"/>
    </ligand>
</feature>
<feature type="binding site" evidence="1">
    <location>
        <position position="87"/>
    </location>
    <ligand>
        <name>5-phospho-alpha-D-ribose 1-diphosphate</name>
        <dbReference type="ChEBI" id="CHEBI:58017"/>
    </ligand>
</feature>
<feature type="binding site" evidence="1">
    <location>
        <begin position="89"/>
        <end position="92"/>
    </location>
    <ligand>
        <name>5-phospho-alpha-D-ribose 1-diphosphate</name>
        <dbReference type="ChEBI" id="CHEBI:58017"/>
    </ligand>
</feature>
<feature type="binding site" evidence="1">
    <location>
        <position position="91"/>
    </location>
    <ligand>
        <name>Mg(2+)</name>
        <dbReference type="ChEBI" id="CHEBI:18420"/>
        <label>1</label>
    </ligand>
</feature>
<feature type="binding site" evidence="1">
    <location>
        <begin position="107"/>
        <end position="115"/>
    </location>
    <ligand>
        <name>5-phospho-alpha-D-ribose 1-diphosphate</name>
        <dbReference type="ChEBI" id="CHEBI:58017"/>
    </ligand>
</feature>
<feature type="binding site" evidence="1">
    <location>
        <position position="110"/>
    </location>
    <ligand>
        <name>anthranilate</name>
        <dbReference type="ChEBI" id="CHEBI:16567"/>
        <label>1</label>
    </ligand>
</feature>
<feature type="binding site" evidence="1">
    <location>
        <position position="119"/>
    </location>
    <ligand>
        <name>5-phospho-alpha-D-ribose 1-diphosphate</name>
        <dbReference type="ChEBI" id="CHEBI:58017"/>
    </ligand>
</feature>
<feature type="binding site" evidence="1">
    <location>
        <position position="165"/>
    </location>
    <ligand>
        <name>anthranilate</name>
        <dbReference type="ChEBI" id="CHEBI:16567"/>
        <label>2</label>
    </ligand>
</feature>
<feature type="binding site" evidence="1">
    <location>
        <position position="224"/>
    </location>
    <ligand>
        <name>Mg(2+)</name>
        <dbReference type="ChEBI" id="CHEBI:18420"/>
        <label>2</label>
    </ligand>
</feature>
<feature type="binding site" evidence="1">
    <location>
        <position position="225"/>
    </location>
    <ligand>
        <name>Mg(2+)</name>
        <dbReference type="ChEBI" id="CHEBI:18420"/>
        <label>1</label>
    </ligand>
</feature>
<feature type="binding site" evidence="1">
    <location>
        <position position="225"/>
    </location>
    <ligand>
        <name>Mg(2+)</name>
        <dbReference type="ChEBI" id="CHEBI:18420"/>
        <label>2</label>
    </ligand>
</feature>
<reference key="1">
    <citation type="journal article" date="2009" name="J. Bacteriol.">
        <title>Complete genome sequence of the extremophilic Bacillus cereus strain Q1 with industrial applications.</title>
        <authorList>
            <person name="Xiong Z."/>
            <person name="Jiang Y."/>
            <person name="Qi D."/>
            <person name="Lu H."/>
            <person name="Yang F."/>
            <person name="Yang J."/>
            <person name="Chen L."/>
            <person name="Sun L."/>
            <person name="Xu X."/>
            <person name="Xue Y."/>
            <person name="Zhu Y."/>
            <person name="Jin Q."/>
        </authorList>
    </citation>
    <scope>NUCLEOTIDE SEQUENCE [LARGE SCALE GENOMIC DNA]</scope>
    <source>
        <strain>Q1</strain>
    </source>
</reference>